<name>CMA1_RAT</name>
<proteinExistence type="evidence at transcript level"/>
<dbReference type="EC" id="3.4.21.39"/>
<dbReference type="EMBL" id="D38495">
    <property type="protein sequence ID" value="BAA07507.1"/>
    <property type="molecule type" value="mRNA"/>
</dbReference>
<dbReference type="EMBL" id="U67908">
    <property type="protein sequence ID" value="AAB48261.1"/>
    <property type="molecule type" value="mRNA"/>
</dbReference>
<dbReference type="PIR" id="S59135">
    <property type="entry name" value="S59135"/>
</dbReference>
<dbReference type="RefSeq" id="NP_037224.1">
    <property type="nucleotide sequence ID" value="NM_013092.2"/>
</dbReference>
<dbReference type="SMR" id="P50339"/>
<dbReference type="FunCoup" id="P50339">
    <property type="interactions" value="54"/>
</dbReference>
<dbReference type="STRING" id="10116.ENSRNOP00000061330"/>
<dbReference type="BindingDB" id="P50339"/>
<dbReference type="ChEMBL" id="CHEMBL3168"/>
<dbReference type="MEROPS" id="S01.150"/>
<dbReference type="GlyCosmos" id="P50339">
    <property type="glycosylation" value="1 site, No reported glycans"/>
</dbReference>
<dbReference type="GlyGen" id="P50339">
    <property type="glycosylation" value="1 site"/>
</dbReference>
<dbReference type="PhosphoSitePlus" id="P50339"/>
<dbReference type="PaxDb" id="10116-ENSRNOP00000061330"/>
<dbReference type="Ensembl" id="ENSRNOT00000067539.3">
    <property type="protein sequence ID" value="ENSRNOP00000061330.2"/>
    <property type="gene ID" value="ENSRNOG00000020563.7"/>
</dbReference>
<dbReference type="GeneID" id="25627"/>
<dbReference type="KEGG" id="rno:25627"/>
<dbReference type="UCSC" id="RGD:2365">
    <property type="organism name" value="rat"/>
</dbReference>
<dbReference type="AGR" id="RGD:2365"/>
<dbReference type="CTD" id="1215"/>
<dbReference type="RGD" id="2365">
    <property type="gene designation" value="Cma1"/>
</dbReference>
<dbReference type="eggNOG" id="KOG3627">
    <property type="taxonomic scope" value="Eukaryota"/>
</dbReference>
<dbReference type="GeneTree" id="ENSGT01030000234551"/>
<dbReference type="HOGENOM" id="CLU_006842_1_0_1"/>
<dbReference type="InParanoid" id="P50339"/>
<dbReference type="OMA" id="CAGRFIM"/>
<dbReference type="OrthoDB" id="5565075at2759"/>
<dbReference type="PhylomeDB" id="P50339"/>
<dbReference type="BRENDA" id="3.4.21.B5">
    <property type="organism ID" value="5301"/>
</dbReference>
<dbReference type="Reactome" id="R-RNO-1433557">
    <property type="pathway name" value="Signaling by SCF-KIT"/>
</dbReference>
<dbReference type="Reactome" id="R-RNO-1592389">
    <property type="pathway name" value="Activation of Matrix Metalloproteinases"/>
</dbReference>
<dbReference type="Reactome" id="R-RNO-2022377">
    <property type="pathway name" value="Metabolism of Angiotensinogen to Angiotensins"/>
</dbReference>
<dbReference type="PRO" id="PR:P50339"/>
<dbReference type="Proteomes" id="UP000002494">
    <property type="component" value="Chromosome 15"/>
</dbReference>
<dbReference type="Bgee" id="ENSRNOG00000020563">
    <property type="expression patterns" value="Expressed in pancreas and 13 other cell types or tissues"/>
</dbReference>
<dbReference type="GO" id="GO:0036464">
    <property type="term" value="C:cytoplasmic ribonucleoprotein granule"/>
    <property type="evidence" value="ECO:0007669"/>
    <property type="project" value="Ensembl"/>
</dbReference>
<dbReference type="GO" id="GO:0005829">
    <property type="term" value="C:cytosol"/>
    <property type="evidence" value="ECO:0007669"/>
    <property type="project" value="Ensembl"/>
</dbReference>
<dbReference type="GO" id="GO:0005576">
    <property type="term" value="C:extracellular region"/>
    <property type="evidence" value="ECO:0000314"/>
    <property type="project" value="RGD"/>
</dbReference>
<dbReference type="GO" id="GO:0005615">
    <property type="term" value="C:extracellular space"/>
    <property type="evidence" value="ECO:0000318"/>
    <property type="project" value="GO_Central"/>
</dbReference>
<dbReference type="GO" id="GO:0030141">
    <property type="term" value="C:secretory granule"/>
    <property type="evidence" value="ECO:0000266"/>
    <property type="project" value="RGD"/>
</dbReference>
<dbReference type="GO" id="GO:0004175">
    <property type="term" value="F:endopeptidase activity"/>
    <property type="evidence" value="ECO:0000266"/>
    <property type="project" value="RGD"/>
</dbReference>
<dbReference type="GO" id="GO:0008233">
    <property type="term" value="F:peptidase activity"/>
    <property type="evidence" value="ECO:0000303"/>
    <property type="project" value="RGD"/>
</dbReference>
<dbReference type="GO" id="GO:0042277">
    <property type="term" value="F:peptide binding"/>
    <property type="evidence" value="ECO:0000315"/>
    <property type="project" value="RGD"/>
</dbReference>
<dbReference type="GO" id="GO:0004252">
    <property type="term" value="F:serine-type endopeptidase activity"/>
    <property type="evidence" value="ECO:0000314"/>
    <property type="project" value="RGD"/>
</dbReference>
<dbReference type="GO" id="GO:0008236">
    <property type="term" value="F:serine-type peptidase activity"/>
    <property type="evidence" value="ECO:0000266"/>
    <property type="project" value="RGD"/>
</dbReference>
<dbReference type="GO" id="GO:0034769">
    <property type="term" value="P:basement membrane disassembly"/>
    <property type="evidence" value="ECO:0000266"/>
    <property type="project" value="RGD"/>
</dbReference>
<dbReference type="GO" id="GO:0071333">
    <property type="term" value="P:cellular response to glucose stimulus"/>
    <property type="evidence" value="ECO:0000270"/>
    <property type="project" value="RGD"/>
</dbReference>
<dbReference type="GO" id="GO:0140447">
    <property type="term" value="P:cytokine precursor processing"/>
    <property type="evidence" value="ECO:0000266"/>
    <property type="project" value="RGD"/>
</dbReference>
<dbReference type="GO" id="GO:0022617">
    <property type="term" value="P:extracellular matrix disassembly"/>
    <property type="evidence" value="ECO:0000266"/>
    <property type="project" value="RGD"/>
</dbReference>
<dbReference type="GO" id="GO:0030901">
    <property type="term" value="P:midbrain development"/>
    <property type="evidence" value="ECO:0000270"/>
    <property type="project" value="RGD"/>
</dbReference>
<dbReference type="GO" id="GO:0006518">
    <property type="term" value="P:peptide metabolic process"/>
    <property type="evidence" value="ECO:0000270"/>
    <property type="project" value="RGD"/>
</dbReference>
<dbReference type="GO" id="GO:0045766">
    <property type="term" value="P:positive regulation of angiogenesis"/>
    <property type="evidence" value="ECO:0000315"/>
    <property type="project" value="RGD"/>
</dbReference>
<dbReference type="GO" id="GO:0030163">
    <property type="term" value="P:protein catabolic process"/>
    <property type="evidence" value="ECO:0000314"/>
    <property type="project" value="RGD"/>
</dbReference>
<dbReference type="GO" id="GO:0051604">
    <property type="term" value="P:protein maturation"/>
    <property type="evidence" value="ECO:0000318"/>
    <property type="project" value="GO_Central"/>
</dbReference>
<dbReference type="GO" id="GO:0016485">
    <property type="term" value="P:protein processing"/>
    <property type="evidence" value="ECO:0000314"/>
    <property type="project" value="RGD"/>
</dbReference>
<dbReference type="GO" id="GO:0050727">
    <property type="term" value="P:regulation of inflammatory response"/>
    <property type="evidence" value="ECO:0000266"/>
    <property type="project" value="RGD"/>
</dbReference>
<dbReference type="CDD" id="cd00190">
    <property type="entry name" value="Tryp_SPc"/>
    <property type="match status" value="1"/>
</dbReference>
<dbReference type="FunFam" id="2.40.10.10:FF:000014">
    <property type="entry name" value="Complement factor D"/>
    <property type="match status" value="1"/>
</dbReference>
<dbReference type="FunFam" id="2.40.10.10:FF:000005">
    <property type="entry name" value="Serine protease 37"/>
    <property type="match status" value="1"/>
</dbReference>
<dbReference type="Gene3D" id="2.40.10.10">
    <property type="entry name" value="Trypsin-like serine proteases"/>
    <property type="match status" value="2"/>
</dbReference>
<dbReference type="InterPro" id="IPR009003">
    <property type="entry name" value="Peptidase_S1_PA"/>
</dbReference>
<dbReference type="InterPro" id="IPR043504">
    <property type="entry name" value="Peptidase_S1_PA_chymotrypsin"/>
</dbReference>
<dbReference type="InterPro" id="IPR001314">
    <property type="entry name" value="Peptidase_S1A"/>
</dbReference>
<dbReference type="InterPro" id="IPR001254">
    <property type="entry name" value="Trypsin_dom"/>
</dbReference>
<dbReference type="InterPro" id="IPR018114">
    <property type="entry name" value="TRYPSIN_HIS"/>
</dbReference>
<dbReference type="InterPro" id="IPR033116">
    <property type="entry name" value="TRYPSIN_SER"/>
</dbReference>
<dbReference type="PANTHER" id="PTHR24271:SF24">
    <property type="entry name" value="CHYMASE"/>
    <property type="match status" value="1"/>
</dbReference>
<dbReference type="PANTHER" id="PTHR24271">
    <property type="entry name" value="KALLIKREIN-RELATED"/>
    <property type="match status" value="1"/>
</dbReference>
<dbReference type="Pfam" id="PF00089">
    <property type="entry name" value="Trypsin"/>
    <property type="match status" value="1"/>
</dbReference>
<dbReference type="PRINTS" id="PR00722">
    <property type="entry name" value="CHYMOTRYPSIN"/>
</dbReference>
<dbReference type="SMART" id="SM00020">
    <property type="entry name" value="Tryp_SPc"/>
    <property type="match status" value="1"/>
</dbReference>
<dbReference type="SUPFAM" id="SSF50494">
    <property type="entry name" value="Trypsin-like serine proteases"/>
    <property type="match status" value="1"/>
</dbReference>
<dbReference type="PROSITE" id="PS50240">
    <property type="entry name" value="TRYPSIN_DOM"/>
    <property type="match status" value="1"/>
</dbReference>
<dbReference type="PROSITE" id="PS00134">
    <property type="entry name" value="TRYPSIN_HIS"/>
    <property type="match status" value="1"/>
</dbReference>
<dbReference type="PROSITE" id="PS00135">
    <property type="entry name" value="TRYPSIN_SER"/>
    <property type="match status" value="1"/>
</dbReference>
<organism>
    <name type="scientific">Rattus norvegicus</name>
    <name type="common">Rat</name>
    <dbReference type="NCBI Taxonomy" id="10116"/>
    <lineage>
        <taxon>Eukaryota</taxon>
        <taxon>Metazoa</taxon>
        <taxon>Chordata</taxon>
        <taxon>Craniata</taxon>
        <taxon>Vertebrata</taxon>
        <taxon>Euteleostomi</taxon>
        <taxon>Mammalia</taxon>
        <taxon>Eutheria</taxon>
        <taxon>Euarchontoglires</taxon>
        <taxon>Glires</taxon>
        <taxon>Rodentia</taxon>
        <taxon>Myomorpha</taxon>
        <taxon>Muroidea</taxon>
        <taxon>Muridae</taxon>
        <taxon>Murinae</taxon>
        <taxon>Rattus</taxon>
    </lineage>
</organism>
<accession>P50339</accession>
<accession>Q9R2C8</accession>
<comment type="function">
    <text evidence="1">Major secreted protease of mast cells with suspected roles in vasoactive peptide generation, extracellular matrix degradation, and regulation of gland secretion.</text>
</comment>
<comment type="catalytic activity">
    <reaction>
        <text>Preferential cleavage: Phe-|-Xaa &gt; Tyr-|-Xaa &gt; Trp-|-Xaa &gt; Leu-|-Xaa.</text>
        <dbReference type="EC" id="3.4.21.39"/>
    </reaction>
</comment>
<comment type="subcellular location">
    <subcellularLocation>
        <location>Secreted</location>
    </subcellularLocation>
    <subcellularLocation>
        <location>Cytoplasmic granule</location>
    </subcellularLocation>
    <text>Secretory granules.</text>
</comment>
<comment type="tissue specificity">
    <text>Mast cells.</text>
</comment>
<comment type="similarity">
    <text evidence="3">Belongs to the peptidase S1 family. Granzyme subfamily.</text>
</comment>
<gene>
    <name type="primary">Cma1</name>
    <name type="synonym">Mcpt3</name>
</gene>
<sequence>MNLHALCLLLLLLGSSTKAGEIIGGTECIPHSRPYMAYLEIVTSDNYLSACSGFLIRRNFVLTAAHCAGRSITVLLGAHNKTYKEDTWQKLEVEKQFIHPNYDKRLVLHDIMLLKLKEKAKLTLGVGTLPLSANFNFIPPGRMCRAVGWGRTNVNEPASDTLQEVKMRLQEPQSCKHFTSFQHKSQLCVGNPKKMQNVYKGDSGGPLLCAGIAQGIASYVHPNAKPPAVFTRISHYRPWINKILREN</sequence>
<feature type="signal peptide" evidence="2">
    <location>
        <begin position="1"/>
        <end position="19"/>
    </location>
</feature>
<feature type="propeptide" id="PRO_0000027443" description="Activation peptide">
    <location>
        <begin position="20"/>
        <end position="21"/>
    </location>
</feature>
<feature type="chain" id="PRO_0000027444" description="Chymase">
    <location>
        <begin position="22"/>
        <end position="247"/>
    </location>
</feature>
<feature type="domain" description="Peptidase S1" evidence="3">
    <location>
        <begin position="22"/>
        <end position="245"/>
    </location>
</feature>
<feature type="active site" description="Charge relay system" evidence="1">
    <location>
        <position position="66"/>
    </location>
</feature>
<feature type="active site" description="Charge relay system" evidence="1">
    <location>
        <position position="110"/>
    </location>
</feature>
<feature type="active site" description="Charge relay system" evidence="1">
    <location>
        <position position="203"/>
    </location>
</feature>
<feature type="glycosylation site" description="N-linked (GlcNAc...) asparagine" evidence="2">
    <location>
        <position position="80"/>
    </location>
</feature>
<feature type="disulfide bond" evidence="3">
    <location>
        <begin position="51"/>
        <end position="67"/>
    </location>
</feature>
<feature type="disulfide bond" evidence="3">
    <location>
        <begin position="144"/>
        <end position="209"/>
    </location>
</feature>
<feature type="disulfide bond" evidence="3">
    <location>
        <begin position="175"/>
        <end position="188"/>
    </location>
</feature>
<reference key="1">
    <citation type="journal article" date="1995" name="Biochem. J.">
        <title>Cloning of the cDNA encoding a novel rat mast-cell proteinase, rMCP-3, and its expression in comparison with other rat mast-cell proteinases.</title>
        <authorList>
            <person name="Ide H."/>
            <person name="Itoh H."/>
            <person name="Tomita M."/>
            <person name="Murakumo Y."/>
            <person name="Kobayashi T."/>
            <person name="Maruyama H."/>
            <person name="Osada Y."/>
            <person name="Nawa Y."/>
        </authorList>
    </citation>
    <scope>NUCLEOTIDE SEQUENCE [MRNA]</scope>
    <source>
        <tissue>Peritoneal mast cell</tissue>
    </source>
</reference>
<reference key="2">
    <citation type="journal article" date="1997" name="J. Exp. Med.">
        <title>Secretory granule proteases in rat mast cells. Cloning of 10 different serine proteases and a carboxypeptidase A from various rat mast cell populations.</title>
        <authorList>
            <person name="Lutzelschwab C."/>
            <person name="Pejler G."/>
            <person name="Aveskogh M."/>
            <person name="Hellman L."/>
        </authorList>
    </citation>
    <scope>NUCLEOTIDE SEQUENCE [MRNA] OF 2-247</scope>
    <source>
        <strain>Sprague-Dawley</strain>
    </source>
</reference>
<evidence type="ECO:0000250" key="1"/>
<evidence type="ECO:0000255" key="2"/>
<evidence type="ECO:0000255" key="3">
    <source>
        <dbReference type="PROSITE-ProRule" id="PRU00274"/>
    </source>
</evidence>
<keyword id="KW-1015">Disulfide bond</keyword>
<keyword id="KW-0325">Glycoprotein</keyword>
<keyword id="KW-0378">Hydrolase</keyword>
<keyword id="KW-0645">Protease</keyword>
<keyword id="KW-1185">Reference proteome</keyword>
<keyword id="KW-0964">Secreted</keyword>
<keyword id="KW-0720">Serine protease</keyword>
<keyword id="KW-0732">Signal</keyword>
<keyword id="KW-0865">Zymogen</keyword>
<protein>
    <recommendedName>
        <fullName>Chymase</fullName>
        <ecNumber>3.4.21.39</ecNumber>
    </recommendedName>
    <alternativeName>
        <fullName>Alpha-chymase</fullName>
    </alternativeName>
    <alternativeName>
        <fullName>Mast cell protease 3</fullName>
        <shortName>rMCP-3</shortName>
    </alternativeName>
    <alternativeName>
        <fullName>Mast cell protease 5</fullName>
        <shortName>rMCP-5</shortName>
    </alternativeName>
    <alternativeName>
        <fullName>Mast cell protease III</fullName>
        <shortName>rMCP-III</shortName>
    </alternativeName>
</protein>